<evidence type="ECO:0000250" key="1">
    <source>
        <dbReference type="UniProtKB" id="Q9H8S9"/>
    </source>
</evidence>
<evidence type="ECO:0000250" key="2">
    <source>
        <dbReference type="UniProtKB" id="Q9QYW3"/>
    </source>
</evidence>
<evidence type="ECO:0000250" key="3">
    <source>
        <dbReference type="UniProtKB" id="Q9Y3A3"/>
    </source>
</evidence>
<evidence type="ECO:0000256" key="4">
    <source>
        <dbReference type="SAM" id="MobiDB-lite"/>
    </source>
</evidence>
<evidence type="ECO:0000305" key="5"/>
<evidence type="ECO:0000312" key="6">
    <source>
        <dbReference type="WormBase" id="C30A5.3"/>
    </source>
</evidence>
<keyword id="KW-0963">Cytoplasm</keyword>
<keyword id="KW-0333">Golgi apparatus</keyword>
<keyword id="KW-0472">Membrane</keyword>
<keyword id="KW-0479">Metal-binding</keyword>
<keyword id="KW-1185">Reference proteome</keyword>
<keyword id="KW-0813">Transport</keyword>
<keyword id="KW-0862">Zinc</keyword>
<sequence length="223" mass="25895">MTAATENRTVRRNGPGTKRADWNNWSPLAFEEMDSALNIQQYIQQTIKANPADVATILTPPLDQDEGVWKYEHLRQFCIELNGLALLLQRECIPETCQQMTATEQWIFLCAAHKNPNECPAIDYTRHTLDGAATLLNSNKYFPSRVNIKEISISKLGSVARRVYRIFSHAFFHHRKLFDEFENETHLCKRFTTYVSKYNLMQQEHLIVPILPNQQQQQQTTVQ</sequence>
<feature type="chain" id="PRO_0000065205" description="MOB-like protein phocein">
    <location>
        <begin position="1"/>
        <end position="223"/>
    </location>
</feature>
<feature type="region of interest" description="Disordered" evidence="4">
    <location>
        <begin position="1"/>
        <end position="23"/>
    </location>
</feature>
<feature type="binding site" evidence="1">
    <location>
        <position position="92"/>
    </location>
    <ligand>
        <name>Zn(2+)</name>
        <dbReference type="ChEBI" id="CHEBI:29105"/>
    </ligand>
</feature>
<feature type="binding site" evidence="1">
    <location>
        <position position="97"/>
    </location>
    <ligand>
        <name>Zn(2+)</name>
        <dbReference type="ChEBI" id="CHEBI:29105"/>
    </ligand>
</feature>
<feature type="binding site" evidence="1">
    <location>
        <position position="169"/>
    </location>
    <ligand>
        <name>Zn(2+)</name>
        <dbReference type="ChEBI" id="CHEBI:29105"/>
    </ligand>
</feature>
<feature type="binding site" evidence="1">
    <location>
        <position position="174"/>
    </location>
    <ligand>
        <name>Zn(2+)</name>
        <dbReference type="ChEBI" id="CHEBI:29105"/>
    </ligand>
</feature>
<protein>
    <recommendedName>
        <fullName evidence="5">MOB-like protein phocein</fullName>
    </recommendedName>
    <alternativeName>
        <fullName evidence="6">Mps one binder 4 homolog</fullName>
    </alternativeName>
</protein>
<name>PHOCN_CAEEL</name>
<organism>
    <name type="scientific">Caenorhabditis elegans</name>
    <dbReference type="NCBI Taxonomy" id="6239"/>
    <lineage>
        <taxon>Eukaryota</taxon>
        <taxon>Metazoa</taxon>
        <taxon>Ecdysozoa</taxon>
        <taxon>Nematoda</taxon>
        <taxon>Chromadorea</taxon>
        <taxon>Rhabditida</taxon>
        <taxon>Rhabditina</taxon>
        <taxon>Rhabditomorpha</taxon>
        <taxon>Rhabditoidea</taxon>
        <taxon>Rhabditidae</taxon>
        <taxon>Peloderinae</taxon>
        <taxon>Caenorhabditis</taxon>
    </lineage>
</organism>
<gene>
    <name evidence="6" type="primary">mob-4</name>
    <name evidence="6" type="ORF">C30A5.3</name>
</gene>
<comment type="function">
    <text evidence="2">May play a role in membrane trafficking, specifically in membrane budding reactions.</text>
</comment>
<comment type="subcellular location">
    <subcellularLocation>
        <location evidence="3">Cytoplasm</location>
        <location evidence="3">Perinuclear region</location>
    </subcellularLocation>
    <subcellularLocation>
        <location evidence="3">Membrane</location>
        <topology evidence="3">Peripheral membrane protein</topology>
    </subcellularLocation>
    <subcellularLocation>
        <location evidence="3">Golgi apparatus</location>
        <location evidence="3">Golgi stack membrane</location>
        <topology evidence="3">Peripheral membrane protein</topology>
    </subcellularLocation>
</comment>
<comment type="similarity">
    <text evidence="5">Belongs to the MOB1/phocein family.</text>
</comment>
<accession>P34349</accession>
<reference key="1">
    <citation type="journal article" date="1994" name="Nature">
        <title>2.2 Mb of contiguous nucleotide sequence from chromosome III of C. elegans.</title>
        <authorList>
            <person name="Wilson R."/>
            <person name="Ainscough R."/>
            <person name="Anderson K."/>
            <person name="Baynes C."/>
            <person name="Berks M."/>
            <person name="Bonfield J."/>
            <person name="Burton J."/>
            <person name="Connell M."/>
            <person name="Copsey T."/>
            <person name="Cooper J."/>
            <person name="Coulson A."/>
            <person name="Craxton M."/>
            <person name="Dear S."/>
            <person name="Du Z."/>
            <person name="Durbin R."/>
            <person name="Favello A."/>
            <person name="Fraser A."/>
            <person name="Fulton L."/>
            <person name="Gardner A."/>
            <person name="Green P."/>
            <person name="Hawkins T."/>
            <person name="Hillier L."/>
            <person name="Jier M."/>
            <person name="Johnston L."/>
            <person name="Jones M."/>
            <person name="Kershaw J."/>
            <person name="Kirsten J."/>
            <person name="Laisster N."/>
            <person name="Latreille P."/>
            <person name="Lightning J."/>
            <person name="Lloyd C."/>
            <person name="Mortimore B."/>
            <person name="O'Callaghan M."/>
            <person name="Parsons J."/>
            <person name="Percy C."/>
            <person name="Rifken L."/>
            <person name="Roopra A."/>
            <person name="Saunders D."/>
            <person name="Shownkeen R."/>
            <person name="Sims M."/>
            <person name="Smaldon N."/>
            <person name="Smith A."/>
            <person name="Smith M."/>
            <person name="Sonnhammer E."/>
            <person name="Staden R."/>
            <person name="Sulston J."/>
            <person name="Thierry-Mieg J."/>
            <person name="Thomas K."/>
            <person name="Vaudin M."/>
            <person name="Vaughan K."/>
            <person name="Waterston R."/>
            <person name="Watson A."/>
            <person name="Weinstock L."/>
            <person name="Wilkinson-Sproat J."/>
            <person name="Wohldman P."/>
        </authorList>
    </citation>
    <scope>NUCLEOTIDE SEQUENCE [LARGE SCALE GENOMIC DNA]</scope>
    <source>
        <strain>Bristol N2</strain>
    </source>
</reference>
<reference key="2">
    <citation type="journal article" date="1998" name="Science">
        <title>Genome sequence of the nematode C. elegans: a platform for investigating biology.</title>
        <authorList>
            <consortium name="The C. elegans sequencing consortium"/>
        </authorList>
    </citation>
    <scope>NUCLEOTIDE SEQUENCE [LARGE SCALE GENOMIC DNA]</scope>
    <source>
        <strain>Bristol N2</strain>
    </source>
</reference>
<dbReference type="EMBL" id="BX284603">
    <property type="protein sequence ID" value="CCD62652.1"/>
    <property type="molecule type" value="Genomic_DNA"/>
</dbReference>
<dbReference type="PIR" id="S44776">
    <property type="entry name" value="S44776"/>
</dbReference>
<dbReference type="RefSeq" id="NP_498798.2">
    <property type="nucleotide sequence ID" value="NM_066397.4"/>
</dbReference>
<dbReference type="SMR" id="P34349"/>
<dbReference type="BioGRID" id="41363">
    <property type="interactions" value="3"/>
</dbReference>
<dbReference type="FunCoup" id="P34349">
    <property type="interactions" value="2771"/>
</dbReference>
<dbReference type="STRING" id="6239.C30A5.3.1"/>
<dbReference type="PaxDb" id="6239-C30A5.3"/>
<dbReference type="PeptideAtlas" id="P34349"/>
<dbReference type="EnsemblMetazoa" id="C30A5.3.1">
    <property type="protein sequence ID" value="C30A5.3.1"/>
    <property type="gene ID" value="WBGene00016238"/>
</dbReference>
<dbReference type="GeneID" id="176158"/>
<dbReference type="KEGG" id="cel:CELE_C30A5.3"/>
<dbReference type="UCSC" id="C30A5.3.1">
    <property type="organism name" value="c. elegans"/>
</dbReference>
<dbReference type="AGR" id="WB:WBGene00016238"/>
<dbReference type="CTD" id="176158"/>
<dbReference type="WormBase" id="C30A5.3">
    <property type="protein sequence ID" value="CE32154"/>
    <property type="gene ID" value="WBGene00016238"/>
    <property type="gene designation" value="mob-4"/>
</dbReference>
<dbReference type="eggNOG" id="KOG1852">
    <property type="taxonomic scope" value="Eukaryota"/>
</dbReference>
<dbReference type="GeneTree" id="ENSGT01120000271909"/>
<dbReference type="HOGENOM" id="CLU_056981_3_0_1"/>
<dbReference type="InParanoid" id="P34349"/>
<dbReference type="OMA" id="ATCTQMT"/>
<dbReference type="OrthoDB" id="184876at2759"/>
<dbReference type="PhylomeDB" id="P34349"/>
<dbReference type="PRO" id="PR:P34349"/>
<dbReference type="Proteomes" id="UP000001940">
    <property type="component" value="Chromosome III"/>
</dbReference>
<dbReference type="Bgee" id="WBGene00016238">
    <property type="expression patterns" value="Expressed in germ line (C elegans) and 4 other cell types or tissues"/>
</dbReference>
<dbReference type="GO" id="GO:0005737">
    <property type="term" value="C:cytoplasm"/>
    <property type="evidence" value="ECO:0000318"/>
    <property type="project" value="GO_Central"/>
</dbReference>
<dbReference type="GO" id="GO:0032580">
    <property type="term" value="C:Golgi cisterna membrane"/>
    <property type="evidence" value="ECO:0007669"/>
    <property type="project" value="UniProtKB-SubCell"/>
</dbReference>
<dbReference type="GO" id="GO:0048471">
    <property type="term" value="C:perinuclear region of cytoplasm"/>
    <property type="evidence" value="ECO:0007669"/>
    <property type="project" value="UniProtKB-SubCell"/>
</dbReference>
<dbReference type="GO" id="GO:0046872">
    <property type="term" value="F:metal ion binding"/>
    <property type="evidence" value="ECO:0007669"/>
    <property type="project" value="UniProtKB-KW"/>
</dbReference>
<dbReference type="Gene3D" id="1.20.140.30">
    <property type="entry name" value="MOB kinase activator"/>
    <property type="match status" value="1"/>
</dbReference>
<dbReference type="InterPro" id="IPR005301">
    <property type="entry name" value="MOB_kinase_act_fam"/>
</dbReference>
<dbReference type="InterPro" id="IPR036703">
    <property type="entry name" value="MOB_kinase_act_sf"/>
</dbReference>
<dbReference type="PANTHER" id="PTHR22599">
    <property type="entry name" value="MPS ONE BINDER KINASE ACTIVATOR-LIKE MOB"/>
    <property type="match status" value="1"/>
</dbReference>
<dbReference type="Pfam" id="PF03637">
    <property type="entry name" value="Mob1_phocein"/>
    <property type="match status" value="1"/>
</dbReference>
<dbReference type="SMART" id="SM01388">
    <property type="entry name" value="Mob1_phocein"/>
    <property type="match status" value="1"/>
</dbReference>
<dbReference type="SUPFAM" id="SSF101152">
    <property type="entry name" value="Mob1/phocein"/>
    <property type="match status" value="1"/>
</dbReference>
<proteinExistence type="inferred from homology"/>